<name>GSHB_PHOLL</name>
<evidence type="ECO:0000250" key="1"/>
<evidence type="ECO:0000255" key="2">
    <source>
        <dbReference type="HAMAP-Rule" id="MF_00162"/>
    </source>
</evidence>
<accession>Q7M7H8</accession>
<sequence>MIKLGIVMDPISSINIKKDTSFAMLLEAQRRSWELHYMEMSDLYLHQGEARARTRLLQVENHPQQWYQFDREQDLALETLDVILMRKDPPFDTEYIYATYILERAEEKGTLIVNKPQSLRDCNEKLFTAWFPELTPDTLVTRNAAHLREFHQKHGDVIFKPLDGMGGASIFRLKKDDPNVGVIIETLTEHGNRFCMAQNFLPAIKEGDKRVLIVDGEPVPYCLARIPAQGETRGNLAAGGRGEARPLSESDWAIARAVAPTLQEKGLIFVGLDIIGDKLTEINVTSPTCAREIEAAFPDISITGMLMNAIEERLEK</sequence>
<feature type="chain" id="PRO_0000197472" description="Glutathione synthetase">
    <location>
        <begin position="1"/>
        <end position="316"/>
    </location>
</feature>
<feature type="domain" description="ATP-grasp" evidence="2">
    <location>
        <begin position="125"/>
        <end position="311"/>
    </location>
</feature>
<feature type="binding site" evidence="2">
    <location>
        <begin position="151"/>
        <end position="207"/>
    </location>
    <ligand>
        <name>ATP</name>
        <dbReference type="ChEBI" id="CHEBI:30616"/>
    </ligand>
</feature>
<feature type="binding site" evidence="2">
    <location>
        <position position="281"/>
    </location>
    <ligand>
        <name>Mg(2+)</name>
        <dbReference type="ChEBI" id="CHEBI:18420"/>
    </ligand>
</feature>
<feature type="binding site" evidence="2">
    <location>
        <position position="283"/>
    </location>
    <ligand>
        <name>Mg(2+)</name>
        <dbReference type="ChEBI" id="CHEBI:18420"/>
    </ligand>
</feature>
<proteinExistence type="inferred from homology"/>
<dbReference type="EC" id="6.3.2.3" evidence="2"/>
<dbReference type="EMBL" id="BX571862">
    <property type="protein sequence ID" value="CAE13478.1"/>
    <property type="molecule type" value="Genomic_DNA"/>
</dbReference>
<dbReference type="RefSeq" id="WP_011145511.1">
    <property type="nucleotide sequence ID" value="NC_005126.1"/>
</dbReference>
<dbReference type="SMR" id="Q7M7H8"/>
<dbReference type="STRING" id="243265.plu1184"/>
<dbReference type="GeneID" id="48847454"/>
<dbReference type="KEGG" id="plu:plu1184"/>
<dbReference type="eggNOG" id="COG0189">
    <property type="taxonomic scope" value="Bacteria"/>
</dbReference>
<dbReference type="HOGENOM" id="CLU_068239_0_0_6"/>
<dbReference type="OrthoDB" id="9785415at2"/>
<dbReference type="UniPathway" id="UPA00142">
    <property type="reaction ID" value="UER00210"/>
</dbReference>
<dbReference type="Proteomes" id="UP000002514">
    <property type="component" value="Chromosome"/>
</dbReference>
<dbReference type="GO" id="GO:0005737">
    <property type="term" value="C:cytoplasm"/>
    <property type="evidence" value="ECO:0007669"/>
    <property type="project" value="TreeGrafter"/>
</dbReference>
<dbReference type="GO" id="GO:0005524">
    <property type="term" value="F:ATP binding"/>
    <property type="evidence" value="ECO:0007669"/>
    <property type="project" value="UniProtKB-UniRule"/>
</dbReference>
<dbReference type="GO" id="GO:0004363">
    <property type="term" value="F:glutathione synthase activity"/>
    <property type="evidence" value="ECO:0007669"/>
    <property type="project" value="UniProtKB-UniRule"/>
</dbReference>
<dbReference type="GO" id="GO:0046872">
    <property type="term" value="F:metal ion binding"/>
    <property type="evidence" value="ECO:0007669"/>
    <property type="project" value="UniProtKB-KW"/>
</dbReference>
<dbReference type="FunFam" id="3.30.1490.20:FF:000009">
    <property type="entry name" value="Glutathione synthetase"/>
    <property type="match status" value="1"/>
</dbReference>
<dbReference type="FunFam" id="3.30.470.20:FF:000010">
    <property type="entry name" value="Glutathione synthetase"/>
    <property type="match status" value="1"/>
</dbReference>
<dbReference type="FunFam" id="3.40.50.20:FF:000009">
    <property type="entry name" value="Glutathione synthetase"/>
    <property type="match status" value="1"/>
</dbReference>
<dbReference type="Gene3D" id="3.40.50.20">
    <property type="match status" value="1"/>
</dbReference>
<dbReference type="Gene3D" id="3.30.1490.20">
    <property type="entry name" value="ATP-grasp fold, A domain"/>
    <property type="match status" value="1"/>
</dbReference>
<dbReference type="Gene3D" id="3.30.470.20">
    <property type="entry name" value="ATP-grasp fold, B domain"/>
    <property type="match status" value="1"/>
</dbReference>
<dbReference type="HAMAP" id="MF_00162">
    <property type="entry name" value="GSH_S"/>
    <property type="match status" value="1"/>
</dbReference>
<dbReference type="InterPro" id="IPR011761">
    <property type="entry name" value="ATP-grasp"/>
</dbReference>
<dbReference type="InterPro" id="IPR013815">
    <property type="entry name" value="ATP_grasp_subdomain_1"/>
</dbReference>
<dbReference type="InterPro" id="IPR006284">
    <property type="entry name" value="Glut_synth_pro"/>
</dbReference>
<dbReference type="InterPro" id="IPR004218">
    <property type="entry name" value="GSHS_ATP-bd"/>
</dbReference>
<dbReference type="InterPro" id="IPR004215">
    <property type="entry name" value="GSHS_N"/>
</dbReference>
<dbReference type="InterPro" id="IPR016185">
    <property type="entry name" value="PreATP-grasp_dom_sf"/>
</dbReference>
<dbReference type="NCBIfam" id="TIGR01380">
    <property type="entry name" value="glut_syn"/>
    <property type="match status" value="1"/>
</dbReference>
<dbReference type="NCBIfam" id="NF003573">
    <property type="entry name" value="PRK05246.1"/>
    <property type="match status" value="1"/>
</dbReference>
<dbReference type="PANTHER" id="PTHR21621:SF4">
    <property type="entry name" value="GLUTATHIONE SYNTHETASE"/>
    <property type="match status" value="1"/>
</dbReference>
<dbReference type="PANTHER" id="PTHR21621">
    <property type="entry name" value="RIBOSOMAL PROTEIN S6 MODIFICATION PROTEIN"/>
    <property type="match status" value="1"/>
</dbReference>
<dbReference type="Pfam" id="PF02955">
    <property type="entry name" value="GSH-S_ATP"/>
    <property type="match status" value="1"/>
</dbReference>
<dbReference type="Pfam" id="PF02951">
    <property type="entry name" value="GSH-S_N"/>
    <property type="match status" value="1"/>
</dbReference>
<dbReference type="SUPFAM" id="SSF56059">
    <property type="entry name" value="Glutathione synthetase ATP-binding domain-like"/>
    <property type="match status" value="1"/>
</dbReference>
<dbReference type="SUPFAM" id="SSF52440">
    <property type="entry name" value="PreATP-grasp domain"/>
    <property type="match status" value="1"/>
</dbReference>
<dbReference type="PROSITE" id="PS50975">
    <property type="entry name" value="ATP_GRASP"/>
    <property type="match status" value="1"/>
</dbReference>
<keyword id="KW-0067">ATP-binding</keyword>
<keyword id="KW-0317">Glutathione biosynthesis</keyword>
<keyword id="KW-0436">Ligase</keyword>
<keyword id="KW-0460">Magnesium</keyword>
<keyword id="KW-0464">Manganese</keyword>
<keyword id="KW-0479">Metal-binding</keyword>
<keyword id="KW-0547">Nucleotide-binding</keyword>
<keyword id="KW-1185">Reference proteome</keyword>
<reference key="1">
    <citation type="journal article" date="2003" name="Nat. Biotechnol.">
        <title>The genome sequence of the entomopathogenic bacterium Photorhabdus luminescens.</title>
        <authorList>
            <person name="Duchaud E."/>
            <person name="Rusniok C."/>
            <person name="Frangeul L."/>
            <person name="Buchrieser C."/>
            <person name="Givaudan A."/>
            <person name="Taourit S."/>
            <person name="Bocs S."/>
            <person name="Boursaux-Eude C."/>
            <person name="Chandler M."/>
            <person name="Charles J.-F."/>
            <person name="Dassa E."/>
            <person name="Derose R."/>
            <person name="Derzelle S."/>
            <person name="Freyssinet G."/>
            <person name="Gaudriault S."/>
            <person name="Medigue C."/>
            <person name="Lanois A."/>
            <person name="Powell K."/>
            <person name="Siguier P."/>
            <person name="Vincent R."/>
            <person name="Wingate V."/>
            <person name="Zouine M."/>
            <person name="Glaser P."/>
            <person name="Boemare N."/>
            <person name="Danchin A."/>
            <person name="Kunst F."/>
        </authorList>
    </citation>
    <scope>NUCLEOTIDE SEQUENCE [LARGE SCALE GENOMIC DNA]</scope>
    <source>
        <strain>DSM 15139 / CIP 105565 / TT01</strain>
    </source>
</reference>
<comment type="catalytic activity">
    <reaction evidence="2">
        <text>gamma-L-glutamyl-L-cysteine + glycine + ATP = glutathione + ADP + phosphate + H(+)</text>
        <dbReference type="Rhea" id="RHEA:13557"/>
        <dbReference type="ChEBI" id="CHEBI:15378"/>
        <dbReference type="ChEBI" id="CHEBI:30616"/>
        <dbReference type="ChEBI" id="CHEBI:43474"/>
        <dbReference type="ChEBI" id="CHEBI:57305"/>
        <dbReference type="ChEBI" id="CHEBI:57925"/>
        <dbReference type="ChEBI" id="CHEBI:58173"/>
        <dbReference type="ChEBI" id="CHEBI:456216"/>
        <dbReference type="EC" id="6.3.2.3"/>
    </reaction>
</comment>
<comment type="cofactor">
    <cofactor evidence="1">
        <name>Mg(2+)</name>
        <dbReference type="ChEBI" id="CHEBI:18420"/>
    </cofactor>
    <cofactor evidence="1">
        <name>Mn(2+)</name>
        <dbReference type="ChEBI" id="CHEBI:29035"/>
    </cofactor>
    <text evidence="1">Binds 1 Mg(2+) or Mn(2+) ion per subunit.</text>
</comment>
<comment type="pathway">
    <text evidence="2">Sulfur metabolism; glutathione biosynthesis; glutathione from L-cysteine and L-glutamate: step 2/2.</text>
</comment>
<comment type="similarity">
    <text evidence="2">Belongs to the prokaryotic GSH synthase family.</text>
</comment>
<organism>
    <name type="scientific">Photorhabdus laumondii subsp. laumondii (strain DSM 15139 / CIP 105565 / TT01)</name>
    <name type="common">Photorhabdus luminescens subsp. laumondii</name>
    <dbReference type="NCBI Taxonomy" id="243265"/>
    <lineage>
        <taxon>Bacteria</taxon>
        <taxon>Pseudomonadati</taxon>
        <taxon>Pseudomonadota</taxon>
        <taxon>Gammaproteobacteria</taxon>
        <taxon>Enterobacterales</taxon>
        <taxon>Morganellaceae</taxon>
        <taxon>Photorhabdus</taxon>
    </lineage>
</organism>
<gene>
    <name evidence="2" type="primary">gshB</name>
    <name type="ordered locus">plu1184</name>
</gene>
<protein>
    <recommendedName>
        <fullName evidence="2">Glutathione synthetase</fullName>
        <ecNumber evidence="2">6.3.2.3</ecNumber>
    </recommendedName>
    <alternativeName>
        <fullName evidence="2">GSH synthetase</fullName>
        <shortName evidence="2">GSH-S</shortName>
        <shortName evidence="2">GSHase</shortName>
    </alternativeName>
    <alternativeName>
        <fullName evidence="2">Glutathione synthase</fullName>
    </alternativeName>
</protein>